<gene>
    <name evidence="1" type="primary">tolB</name>
    <name type="ordered locus">jhp_1055</name>
</gene>
<comment type="function">
    <text evidence="1">Part of the Tol-Pal system, which plays a role in outer membrane invagination during cell division and is important for maintaining outer membrane integrity.</text>
</comment>
<comment type="subunit">
    <text evidence="1">The Tol-Pal system is composed of five core proteins: the inner membrane proteins TolA, TolQ and TolR, the periplasmic protein TolB and the outer membrane protein Pal. They form a network linking the inner and outer membranes and the peptidoglycan layer.</text>
</comment>
<comment type="subcellular location">
    <subcellularLocation>
        <location evidence="1">Periplasm</location>
    </subcellularLocation>
</comment>
<comment type="similarity">
    <text evidence="1">Belongs to the TolB family.</text>
</comment>
<proteinExistence type="inferred from homology"/>
<sequence length="417" mass="47742">MKYLWLFLIYAIGLFATDKTLDIIKTIQKLPKIEVRYSIDNDANYALKLHEVLANDLKTSQHFDVSQNKEQGAINYAELKDKKVHLVALVSVAVENGNKISRLKLYDVDTGTLKKTFDYPIVSLDLYPFAAHNMAIVVNDYLKAPSIAWMKRLIVFSKYIGPGITNIALADYTMRYQKEIIKNNRLNIFPKWANAEQTEFYYTQYGEKTPMILKYNIQKATHENIASSQGMAVVSSVSSDGSKILMSLAPDGQPDVYLYDTHKKTKTKITRYPGIDVSGVFLEDDKSMAFVSDRSGYPNIYMKKLGLKESAEQLLYEGRSNESIDAYKDSIVYVSRENLNEFGKTVFNLNLIALNSKYIRRLTVNGSNQMPRFSMDGRNIMYIKKTSQEYAMGLILLDYNQSFLFPLKNVKIQAFDW</sequence>
<feature type="signal peptide" evidence="1">
    <location>
        <begin position="1"/>
        <end position="16"/>
    </location>
</feature>
<feature type="chain" id="PRO_0000034659" description="Tol-Pal system protein TolB" evidence="1">
    <location>
        <begin position="17"/>
        <end position="417"/>
    </location>
</feature>
<organism>
    <name type="scientific">Helicobacter pylori (strain J99 / ATCC 700824)</name>
    <name type="common">Campylobacter pylori J99</name>
    <dbReference type="NCBI Taxonomy" id="85963"/>
    <lineage>
        <taxon>Bacteria</taxon>
        <taxon>Pseudomonadati</taxon>
        <taxon>Campylobacterota</taxon>
        <taxon>Epsilonproteobacteria</taxon>
        <taxon>Campylobacterales</taxon>
        <taxon>Helicobacteraceae</taxon>
        <taxon>Helicobacter</taxon>
    </lineage>
</organism>
<name>TOLB_HELPJ</name>
<evidence type="ECO:0000255" key="1">
    <source>
        <dbReference type="HAMAP-Rule" id="MF_00671"/>
    </source>
</evidence>
<dbReference type="EMBL" id="AE001439">
    <property type="protein sequence ID" value="AAD06634.1"/>
    <property type="molecule type" value="Genomic_DNA"/>
</dbReference>
<dbReference type="PIR" id="G71854">
    <property type="entry name" value="G71854"/>
</dbReference>
<dbReference type="RefSeq" id="WP_000876455.1">
    <property type="nucleotide sequence ID" value="NC_000921.1"/>
</dbReference>
<dbReference type="SMR" id="Q9ZK86"/>
<dbReference type="KEGG" id="hpj:jhp_1055"/>
<dbReference type="PATRIC" id="fig|85963.30.peg.1533"/>
<dbReference type="eggNOG" id="COG0823">
    <property type="taxonomic scope" value="Bacteria"/>
</dbReference>
<dbReference type="Proteomes" id="UP000000804">
    <property type="component" value="Chromosome"/>
</dbReference>
<dbReference type="GO" id="GO:0042597">
    <property type="term" value="C:periplasmic space"/>
    <property type="evidence" value="ECO:0007669"/>
    <property type="project" value="UniProtKB-SubCell"/>
</dbReference>
<dbReference type="GO" id="GO:0051301">
    <property type="term" value="P:cell division"/>
    <property type="evidence" value="ECO:0007669"/>
    <property type="project" value="UniProtKB-KW"/>
</dbReference>
<dbReference type="GO" id="GO:0017038">
    <property type="term" value="P:protein import"/>
    <property type="evidence" value="ECO:0007669"/>
    <property type="project" value="InterPro"/>
</dbReference>
<dbReference type="Gene3D" id="2.120.10.30">
    <property type="entry name" value="TolB, C-terminal domain"/>
    <property type="match status" value="1"/>
</dbReference>
<dbReference type="Gene3D" id="3.40.50.10070">
    <property type="entry name" value="TolB, N-terminal domain"/>
    <property type="match status" value="1"/>
</dbReference>
<dbReference type="HAMAP" id="MF_00671">
    <property type="entry name" value="TolB"/>
    <property type="match status" value="1"/>
</dbReference>
<dbReference type="InterPro" id="IPR011042">
    <property type="entry name" value="6-blade_b-propeller_TolB-like"/>
</dbReference>
<dbReference type="InterPro" id="IPR011659">
    <property type="entry name" value="PD40"/>
</dbReference>
<dbReference type="InterPro" id="IPR014167">
    <property type="entry name" value="Tol-Pal_TolB"/>
</dbReference>
<dbReference type="NCBIfam" id="NF003124">
    <property type="entry name" value="PRK04043.1"/>
    <property type="match status" value="1"/>
</dbReference>
<dbReference type="PANTHER" id="PTHR36842:SF1">
    <property type="entry name" value="PROTEIN TOLB"/>
    <property type="match status" value="1"/>
</dbReference>
<dbReference type="PANTHER" id="PTHR36842">
    <property type="entry name" value="PROTEIN TOLB HOMOLOG"/>
    <property type="match status" value="1"/>
</dbReference>
<dbReference type="Pfam" id="PF07676">
    <property type="entry name" value="PD40"/>
    <property type="match status" value="1"/>
</dbReference>
<dbReference type="SUPFAM" id="SSF52964">
    <property type="entry name" value="TolB, N-terminal domain"/>
    <property type="match status" value="1"/>
</dbReference>
<dbReference type="SUPFAM" id="SSF69304">
    <property type="entry name" value="Tricorn protease N-terminal domain"/>
    <property type="match status" value="1"/>
</dbReference>
<accession>Q9ZK86</accession>
<protein>
    <recommendedName>
        <fullName evidence="1">Tol-Pal system protein TolB</fullName>
    </recommendedName>
</protein>
<keyword id="KW-0131">Cell cycle</keyword>
<keyword id="KW-0132">Cell division</keyword>
<keyword id="KW-0574">Periplasm</keyword>
<keyword id="KW-0732">Signal</keyword>
<reference key="1">
    <citation type="journal article" date="1999" name="Nature">
        <title>Genomic sequence comparison of two unrelated isolates of the human gastric pathogen Helicobacter pylori.</title>
        <authorList>
            <person name="Alm R.A."/>
            <person name="Ling L.-S.L."/>
            <person name="Moir D.T."/>
            <person name="King B.L."/>
            <person name="Brown E.D."/>
            <person name="Doig P.C."/>
            <person name="Smith D.R."/>
            <person name="Noonan B."/>
            <person name="Guild B.C."/>
            <person name="deJonge B.L."/>
            <person name="Carmel G."/>
            <person name="Tummino P.J."/>
            <person name="Caruso A."/>
            <person name="Uria-Nickelsen M."/>
            <person name="Mills D.M."/>
            <person name="Ives C."/>
            <person name="Gibson R."/>
            <person name="Merberg D."/>
            <person name="Mills S.D."/>
            <person name="Jiang Q."/>
            <person name="Taylor D.E."/>
            <person name="Vovis G.F."/>
            <person name="Trust T.J."/>
        </authorList>
    </citation>
    <scope>NUCLEOTIDE SEQUENCE [LARGE SCALE GENOMIC DNA]</scope>
    <source>
        <strain>J99 / ATCC 700824</strain>
    </source>
</reference>